<comment type="function">
    <text evidence="1 4 5 6 7 9">Associates with OSMR to form the interleukin-31 receptor which activates STAT3 and to a lower extent STAT1 and STAT5 (PubMed:11877449, PubMed:14504285, PubMed:15194700, PubMed:15627637). May function in skin immunity (PubMed:15184896). Mediates IL31-induced itch, probably in a manner dependent on cation channels TRPA1 and TRPV1 (By similarity). Positively regulates numbers and cycling status of immature subsets of myeloid progenitor cells in bone marrow in vivo and enhances myeloid progenitor cell survival in vitro (By similarity).</text>
</comment>
<comment type="subunit">
    <text evidence="7">Heterodimer with OSMR. Interacts with JAK1 and STAT3.</text>
</comment>
<comment type="subcellular location">
    <subcellularLocation>
        <location evidence="20 21">Cell membrane</location>
        <topology evidence="20 21">Single-pass type I membrane protein</topology>
    </subcellularLocation>
    <subcellularLocation>
        <location evidence="1">Presynaptic cell membrane</location>
    </subcellularLocation>
    <subcellularLocation>
        <location evidence="1">Cell projection</location>
        <location evidence="1">Axon</location>
    </subcellularLocation>
</comment>
<comment type="alternative products">
    <event type="alternative splicing"/>
    <isoform>
        <id>Q8NI17-1</id>
        <name>1</name>
        <sequence type="displayed"/>
    </isoform>
    <isoform>
        <id>Q8NI17-2</id>
        <name>2</name>
        <name>v3</name>
        <sequence type="described" ref="VSP_022799"/>
    </isoform>
    <isoform>
        <id>Q8NI17-3</id>
        <name>3</name>
        <name>v4</name>
        <sequence type="described" ref="VSP_022800 VSP_022812 VSP_022813"/>
    </isoform>
    <isoform>
        <id>Q8NI17-4</id>
        <name>4</name>
        <name>v2</name>
        <sequence type="described" ref="VSP_022799 VSP_022801"/>
    </isoform>
    <isoform>
        <id>Q8NI17-5</id>
        <name>5</name>
        <name>v1</name>
        <sequence type="described" ref="VSP_022799 VSP_022812 VSP_022813"/>
    </isoform>
    <isoform>
        <id>Q8NI17-6</id>
        <name>6</name>
        <sequence type="described" ref="VSP_022798"/>
    </isoform>
    <isoform>
        <id>Q8NI17-7</id>
        <name>7</name>
        <sequence type="described" ref="VSP_022800 VSP_022802 VSP_022804 VSP_022805"/>
    </isoform>
    <isoform>
        <id>Q8NI17-8</id>
        <name>8</name>
        <sequence type="described" ref="VSP_022799 VSP_022803 VSP_022807"/>
    </isoform>
    <isoform>
        <id>Q8NI17-9</id>
        <name>9</name>
        <name>GPL560</name>
        <name>short</name>
        <sequence type="described" ref="VSP_022800 VSP_022806"/>
    </isoform>
    <isoform>
        <id>Q8NI17-10</id>
        <name>10</name>
        <name>GPL610</name>
        <sequence type="described" ref="VSP_022800 VSP_022809 VSP_022810"/>
    </isoform>
    <isoform>
        <id>Q8NI17-11</id>
        <name>11</name>
        <name>GPL626</name>
        <sequence type="described" ref="VSP_022800 VSP_022808 VSP_022811"/>
    </isoform>
    <isoform>
        <id>Q8NI17-12</id>
        <name>12</name>
        <name>GPL745</name>
        <name>long</name>
        <sequence type="described" ref="VSP_022800"/>
    </isoform>
</comment>
<comment type="tissue specificity">
    <text evidence="4 5 6 10 11 13 14">Expressed in CD14- and CD56-positive blood cells (PubMed:11877449). Expressed in macrophages (PubMed:16461143, PubMed:18439099). Expressed in keratinocytes (PubMed:21261663). Expressed in a subset of dorsal root ganglia neurons (at protein level) (PubMed:24373353). Expressed at low levels in testis, ovary, brain, prostate, placenta, thymus, bone marrow, trachea and skin (PubMed:11877449, PubMed:14504285, PubMed:15184896). Expressed in bronchial and alveolar epithelial cells and pulmonary fibroblasts (PubMed:18439099). Detected in all of the myelomonocytic lineage (PubMed:14504285). Isoform 6: Expressed at higher levels in lesional skin compared to healthy skin of atopic dermatitis patients (PubMed:24373353).</text>
</comment>
<comment type="induction">
    <text evidence="4 5 6 10 11 13">Up-regulated in lesional keratinocytes of patients with atopic dermatitis (PubMed:16461143). Up-regulated by IFNG/IFN-gamma (PubMed:11877449, PubMed:14504285, PubMed:15184896, PubMed:18439099, PubMed:21261663). Up-regulated by bacterial lipopolysaccharides (LPS) (PubMed:11877449, PubMed:14504285, PubMed:15184896). Up-regulated by triacylated lipoprotein (Pam3Cys) (PubMed:21261663). Up-regulated by TGFB1/TGF-beta (PubMed:18439099).</text>
</comment>
<comment type="PTM">
    <text evidence="5">N-glycosylated.</text>
</comment>
<comment type="disease" evidence="12">
    <disease id="DI-03102">
        <name>Amyloidosis, primary localized cutaneous, 2</name>
        <acronym>PLCA2</acronym>
        <description>A primary amyloidosis characterized by localized cutaneous amyloid deposition. This condition usually presents with itching (especially on the lower legs) and visible changes of skin hyperpigmentation and thickening that may be exacerbated by chronic scratching and rubbing. Primary localized cutaneous amyloidosis is often divided into macular and lichen subtypes although many affected individuals often show both variants coexisting. Lichen amyloidosis characteristically presents as a pruritic eruption of grouped hyperkeratotic papules with a predilection for the shins, calves, ankles and dorsa of feet and thighs. Papules may coalesce to form hyperkeratotic plaques that can resemble lichen planus, lichen simplex or nodular prurigo. Macular amyloidosis is characterized by small pigmented macules that may merge to produce macular hyperpigmentation, sometimes with a reticulate or rippled pattern. In macular and lichen amyloidosis, amyloid is deposited in the papillary dermis in association with grouped colloid bodies, thought to represent degenerate basal keratinocytes. The amyloid deposits probably reflect a combination of degenerate keratin filaments, serum amyloid P component, and deposition of immunoglobulins.</description>
        <dbReference type="MIM" id="613955"/>
    </disease>
    <text>The disease is caused by variants affecting the gene represented in this entry.</text>
</comment>
<comment type="miscellaneous">
    <molecule>Isoform 9</molecule>
    <text evidence="19">Major isoform. Dominant negative IL31 receptor.</text>
</comment>
<comment type="miscellaneous">
    <molecule>Isoform 12</molecule>
    <text evidence="19">Major isoform. Functional IL31 receptor.</text>
</comment>
<comment type="similarity">
    <text evidence="19">Belongs to the type I cytokine receptor family. Type 2 subfamily.</text>
</comment>
<comment type="sequence caution" evidence="19">
    <conflict type="erroneous initiation">
        <sequence resource="EMBL-CDS" id="AAS86444"/>
    </conflict>
    <text>Truncated N-terminus.</text>
</comment>
<comment type="sequence caution" evidence="19">
    <conflict type="erroneous initiation">
        <sequence resource="EMBL-CDS" id="AAS86445"/>
    </conflict>
    <text>Truncated N-terminus.</text>
</comment>
<dbReference type="EMBL" id="AF486620">
    <property type="protein sequence ID" value="AAM27958.1"/>
    <property type="molecule type" value="mRNA"/>
</dbReference>
<dbReference type="EMBL" id="AY499339">
    <property type="protein sequence ID" value="AAS86444.1"/>
    <property type="status" value="ALT_INIT"/>
    <property type="molecule type" value="mRNA"/>
</dbReference>
<dbReference type="EMBL" id="AY499340">
    <property type="protein sequence ID" value="AAS86445.1"/>
    <property type="status" value="ALT_INIT"/>
    <property type="molecule type" value="mRNA"/>
</dbReference>
<dbReference type="EMBL" id="AY499341">
    <property type="protein sequence ID" value="AAS86446.1"/>
    <property type="molecule type" value="mRNA"/>
</dbReference>
<dbReference type="EMBL" id="AY499342">
    <property type="protein sequence ID" value="AAS86447.1"/>
    <property type="molecule type" value="mRNA"/>
</dbReference>
<dbReference type="EMBL" id="AF106913">
    <property type="protein sequence ID" value="AAL36452.1"/>
    <property type="molecule type" value="mRNA"/>
</dbReference>
<dbReference type="EMBL" id="AY358117">
    <property type="protein sequence ID" value="AAQ88484.1"/>
    <property type="molecule type" value="mRNA"/>
</dbReference>
<dbReference type="EMBL" id="AY358740">
    <property type="protein sequence ID" value="AAQ89100.1"/>
    <property type="molecule type" value="mRNA"/>
</dbReference>
<dbReference type="EMBL" id="AC008914">
    <property type="status" value="NOT_ANNOTATED_CDS"/>
    <property type="molecule type" value="Genomic_DNA"/>
</dbReference>
<dbReference type="EMBL" id="BC110490">
    <property type="protein sequence ID" value="AAI10491.1"/>
    <property type="molecule type" value="mRNA"/>
</dbReference>
<dbReference type="CCDS" id="CCDS3970.2">
    <molecule id="Q8NI17-2"/>
</dbReference>
<dbReference type="CCDS" id="CCDS56365.1">
    <molecule id="Q8NI17-5"/>
</dbReference>
<dbReference type="CCDS" id="CCDS56366.1">
    <molecule id="Q8NI17-3"/>
</dbReference>
<dbReference type="CCDS" id="CCDS56367.1">
    <molecule id="Q8NI17-6"/>
</dbReference>
<dbReference type="CCDS" id="CCDS75244.1">
    <molecule id="Q8NI17-8"/>
</dbReference>
<dbReference type="CCDS" id="CCDS75245.1">
    <molecule id="Q8NI17-12"/>
</dbReference>
<dbReference type="RefSeq" id="NP_001229565.1">
    <molecule id="Q8NI17-12"/>
    <property type="nucleotide sequence ID" value="NM_001242636.2"/>
</dbReference>
<dbReference type="RefSeq" id="NP_001229566.1">
    <molecule id="Q8NI17-5"/>
    <property type="nucleotide sequence ID" value="NM_001242637.2"/>
</dbReference>
<dbReference type="RefSeq" id="NP_001229567.1">
    <molecule id="Q8NI17-3"/>
    <property type="nucleotide sequence ID" value="NM_001242638.2"/>
</dbReference>
<dbReference type="RefSeq" id="NP_001229568.1">
    <molecule id="Q8NI17-6"/>
    <property type="nucleotide sequence ID" value="NM_001242639.2"/>
</dbReference>
<dbReference type="RefSeq" id="NP_001284499.1">
    <molecule id="Q8NI17-8"/>
    <property type="nucleotide sequence ID" value="NM_001297570.3"/>
</dbReference>
<dbReference type="RefSeq" id="NP_001284501.1">
    <property type="nucleotide sequence ID" value="NM_001297572.1"/>
</dbReference>
<dbReference type="RefSeq" id="NP_620586.3">
    <molecule id="Q8NI17-2"/>
    <property type="nucleotide sequence ID" value="NM_139017.5"/>
</dbReference>
<dbReference type="RefSeq" id="XP_011541444.1">
    <molecule id="Q8NI17-1"/>
    <property type="nucleotide sequence ID" value="XM_011543142.3"/>
</dbReference>
<dbReference type="RefSeq" id="XP_011541445.1">
    <property type="nucleotide sequence ID" value="XM_011543143.2"/>
</dbReference>
<dbReference type="RefSeq" id="XP_011541446.1">
    <property type="nucleotide sequence ID" value="XM_011543144.2"/>
</dbReference>
<dbReference type="RefSeq" id="XP_047272656.1">
    <molecule id="Q8NI17-6"/>
    <property type="nucleotide sequence ID" value="XM_047416700.1"/>
</dbReference>
<dbReference type="RefSeq" id="XP_054207547.1">
    <molecule id="Q8NI17-1"/>
    <property type="nucleotide sequence ID" value="XM_054351572.1"/>
</dbReference>
<dbReference type="RefSeq" id="XP_054207548.1">
    <molecule id="Q8NI17-6"/>
    <property type="nucleotide sequence ID" value="XM_054351573.1"/>
</dbReference>
<dbReference type="SMR" id="Q8NI17"/>
<dbReference type="BioGRID" id="126357">
    <property type="interactions" value="29"/>
</dbReference>
<dbReference type="CORUM" id="Q8NI17"/>
<dbReference type="FunCoup" id="Q8NI17">
    <property type="interactions" value="395"/>
</dbReference>
<dbReference type="IntAct" id="Q8NI17">
    <property type="interactions" value="25"/>
</dbReference>
<dbReference type="STRING" id="9606.ENSP00000498630"/>
<dbReference type="ChEMBL" id="CHEMBL4630894"/>
<dbReference type="DrugBank" id="DB15252">
    <property type="generic name" value="Nemolizumab"/>
</dbReference>
<dbReference type="DrugCentral" id="Q8NI17"/>
<dbReference type="GuidetoPHARMACOLOGY" id="1710"/>
<dbReference type="GlyCosmos" id="Q8NI17">
    <property type="glycosylation" value="10 sites, No reported glycans"/>
</dbReference>
<dbReference type="GlyGen" id="Q8NI17">
    <property type="glycosylation" value="11 sites"/>
</dbReference>
<dbReference type="iPTMnet" id="Q8NI17"/>
<dbReference type="PhosphoSitePlus" id="Q8NI17"/>
<dbReference type="BioMuta" id="IL31RA"/>
<dbReference type="DMDM" id="74730327"/>
<dbReference type="jPOST" id="Q8NI17"/>
<dbReference type="MassIVE" id="Q8NI17"/>
<dbReference type="PaxDb" id="9606-ENSP00000415900"/>
<dbReference type="PeptideAtlas" id="Q8NI17"/>
<dbReference type="ProteomicsDB" id="73801">
    <molecule id="Q8NI17-1"/>
</dbReference>
<dbReference type="ProteomicsDB" id="73802">
    <molecule id="Q8NI17-10"/>
</dbReference>
<dbReference type="ProteomicsDB" id="73803">
    <molecule id="Q8NI17-11"/>
</dbReference>
<dbReference type="ProteomicsDB" id="73804">
    <molecule id="Q8NI17-12"/>
</dbReference>
<dbReference type="ProteomicsDB" id="73805">
    <molecule id="Q8NI17-2"/>
</dbReference>
<dbReference type="ProteomicsDB" id="73806">
    <molecule id="Q8NI17-3"/>
</dbReference>
<dbReference type="ProteomicsDB" id="73807">
    <molecule id="Q8NI17-4"/>
</dbReference>
<dbReference type="ProteomicsDB" id="73808">
    <molecule id="Q8NI17-5"/>
</dbReference>
<dbReference type="ProteomicsDB" id="73809">
    <molecule id="Q8NI17-6"/>
</dbReference>
<dbReference type="ProteomicsDB" id="73810">
    <molecule id="Q8NI17-7"/>
</dbReference>
<dbReference type="ProteomicsDB" id="73811">
    <molecule id="Q8NI17-8"/>
</dbReference>
<dbReference type="ProteomicsDB" id="73812">
    <molecule id="Q8NI17-9"/>
</dbReference>
<dbReference type="ABCD" id="Q8NI17">
    <property type="antibodies" value="1 sequenced antibody"/>
</dbReference>
<dbReference type="Antibodypedia" id="23449">
    <property type="antibodies" value="327 antibodies from 27 providers"/>
</dbReference>
<dbReference type="DNASU" id="133396"/>
<dbReference type="Ensembl" id="ENST00000297015.7">
    <molecule id="Q8NI17-12"/>
    <property type="protein sequence ID" value="ENSP00000297015.4"/>
    <property type="gene ID" value="ENSG00000164509.17"/>
</dbReference>
<dbReference type="Ensembl" id="ENST00000354961.8">
    <molecule id="Q8NI17-3"/>
    <property type="protein sequence ID" value="ENSP00000347047.4"/>
    <property type="gene ID" value="ENSG00000164509.17"/>
</dbReference>
<dbReference type="Ensembl" id="ENST00000359040.10">
    <molecule id="Q8NI17-5"/>
    <property type="protein sequence ID" value="ENSP00000351935.5"/>
    <property type="gene ID" value="ENSG00000164509.17"/>
</dbReference>
<dbReference type="Ensembl" id="ENST00000396836.6">
    <molecule id="Q8NI17-8"/>
    <property type="protein sequence ID" value="ENSP00000380048.2"/>
    <property type="gene ID" value="ENSG00000164509.17"/>
</dbReference>
<dbReference type="Ensembl" id="ENST00000490985.5">
    <molecule id="Q8NI17-6"/>
    <property type="protein sequence ID" value="ENSP00000427533.1"/>
    <property type="gene ID" value="ENSG00000164509.17"/>
</dbReference>
<dbReference type="Ensembl" id="ENST00000652347.2">
    <molecule id="Q8NI17-2"/>
    <property type="protein sequence ID" value="ENSP00000498630.1"/>
    <property type="gene ID" value="ENSG00000164509.17"/>
</dbReference>
<dbReference type="GeneID" id="133396"/>
<dbReference type="KEGG" id="hsa:133396"/>
<dbReference type="MANE-Select" id="ENST00000652347.2">
    <molecule id="Q8NI17-2"/>
    <property type="protein sequence ID" value="ENSP00000498630.1"/>
    <property type="RefSeq nucleotide sequence ID" value="NM_139017.7"/>
    <property type="RefSeq protein sequence ID" value="NP_620586.3"/>
</dbReference>
<dbReference type="UCSC" id="uc003jqk.3">
    <molecule id="Q8NI17-1"/>
    <property type="organism name" value="human"/>
</dbReference>
<dbReference type="AGR" id="HGNC:18969"/>
<dbReference type="CTD" id="133396"/>
<dbReference type="DisGeNET" id="133396"/>
<dbReference type="GeneCards" id="IL31RA"/>
<dbReference type="HGNC" id="HGNC:18969">
    <property type="gene designation" value="IL31RA"/>
</dbReference>
<dbReference type="HPA" id="ENSG00000164509">
    <property type="expression patterns" value="Tissue enhanced (bone marrow, lymphoid tissue, testis)"/>
</dbReference>
<dbReference type="MalaCards" id="IL31RA"/>
<dbReference type="MIM" id="609510">
    <property type="type" value="gene"/>
</dbReference>
<dbReference type="MIM" id="613955">
    <property type="type" value="phenotype"/>
</dbReference>
<dbReference type="neXtProt" id="NX_Q8NI17"/>
<dbReference type="OpenTargets" id="ENSG00000164509"/>
<dbReference type="Orphanet" id="353220">
    <property type="disease" value="Familial primary localized cutaneous amyloidosis"/>
</dbReference>
<dbReference type="PharmGKB" id="PA134952624"/>
<dbReference type="VEuPathDB" id="HostDB:ENSG00000164509"/>
<dbReference type="eggNOG" id="ENOG502QVZY">
    <property type="taxonomic scope" value="Eukaryota"/>
</dbReference>
<dbReference type="GeneTree" id="ENSGT00940000155603"/>
<dbReference type="HOGENOM" id="CLU_017990_2_0_1"/>
<dbReference type="InParanoid" id="Q8NI17"/>
<dbReference type="OMA" id="NSTHWME"/>
<dbReference type="OrthoDB" id="9828391at2759"/>
<dbReference type="PAN-GO" id="Q8NI17">
    <property type="GO annotations" value="5 GO annotations based on evolutionary models"/>
</dbReference>
<dbReference type="PhylomeDB" id="Q8NI17"/>
<dbReference type="TreeFam" id="TF338122"/>
<dbReference type="PathwayCommons" id="Q8NI17"/>
<dbReference type="Reactome" id="R-HSA-6788467">
    <property type="pathway name" value="IL-6-type cytokine receptor ligand interactions"/>
</dbReference>
<dbReference type="SignaLink" id="Q8NI17"/>
<dbReference type="SIGNOR" id="Q8NI17"/>
<dbReference type="BioGRID-ORCS" id="133396">
    <property type="hits" value="12 hits in 1148 CRISPR screens"/>
</dbReference>
<dbReference type="ChiTaRS" id="IL31RA">
    <property type="organism name" value="human"/>
</dbReference>
<dbReference type="GeneWiki" id="IL31RA"/>
<dbReference type="GenomeRNAi" id="133396"/>
<dbReference type="Pharos" id="Q8NI17">
    <property type="development level" value="Tbio"/>
</dbReference>
<dbReference type="PRO" id="PR:Q8NI17"/>
<dbReference type="Proteomes" id="UP000005640">
    <property type="component" value="Chromosome 5"/>
</dbReference>
<dbReference type="RNAct" id="Q8NI17">
    <property type="molecule type" value="protein"/>
</dbReference>
<dbReference type="Bgee" id="ENSG00000164509">
    <property type="expression patterns" value="Expressed in male germ line stem cell (sensu Vertebrata) in testis and 112 other cell types or tissues"/>
</dbReference>
<dbReference type="ExpressionAtlas" id="Q8NI17">
    <property type="expression patterns" value="baseline and differential"/>
</dbReference>
<dbReference type="GO" id="GO:0030424">
    <property type="term" value="C:axon"/>
    <property type="evidence" value="ECO:0007669"/>
    <property type="project" value="UniProtKB-SubCell"/>
</dbReference>
<dbReference type="GO" id="GO:0009897">
    <property type="term" value="C:external side of plasma membrane"/>
    <property type="evidence" value="ECO:0000318"/>
    <property type="project" value="GO_Central"/>
</dbReference>
<dbReference type="GO" id="GO:0016020">
    <property type="term" value="C:membrane"/>
    <property type="evidence" value="ECO:0000303"/>
    <property type="project" value="UniProtKB"/>
</dbReference>
<dbReference type="GO" id="GO:0005886">
    <property type="term" value="C:plasma membrane"/>
    <property type="evidence" value="ECO:0000304"/>
    <property type="project" value="Reactome"/>
</dbReference>
<dbReference type="GO" id="GO:0042734">
    <property type="term" value="C:presynaptic membrane"/>
    <property type="evidence" value="ECO:0007669"/>
    <property type="project" value="UniProtKB-SubCell"/>
</dbReference>
<dbReference type="GO" id="GO:0043235">
    <property type="term" value="C:receptor complex"/>
    <property type="evidence" value="ECO:0000318"/>
    <property type="project" value="GO_Central"/>
</dbReference>
<dbReference type="GO" id="GO:0019955">
    <property type="term" value="F:cytokine binding"/>
    <property type="evidence" value="ECO:0000318"/>
    <property type="project" value="GO_Central"/>
</dbReference>
<dbReference type="GO" id="GO:0004896">
    <property type="term" value="F:cytokine receptor activity"/>
    <property type="evidence" value="ECO:0000318"/>
    <property type="project" value="GO_Central"/>
</dbReference>
<dbReference type="GO" id="GO:0019901">
    <property type="term" value="F:protein kinase binding"/>
    <property type="evidence" value="ECO:0000303"/>
    <property type="project" value="UniProtKB"/>
</dbReference>
<dbReference type="GO" id="GO:0003713">
    <property type="term" value="F:transcription coactivator activity"/>
    <property type="evidence" value="ECO:0000303"/>
    <property type="project" value="UniProtKB"/>
</dbReference>
<dbReference type="GO" id="GO:0002438">
    <property type="term" value="P:acute inflammatory response to antigenic stimulus"/>
    <property type="evidence" value="ECO:0007669"/>
    <property type="project" value="Ensembl"/>
</dbReference>
<dbReference type="GO" id="GO:0007169">
    <property type="term" value="P:cell surface receptor protein tyrosine kinase signaling pathway"/>
    <property type="evidence" value="ECO:0000303"/>
    <property type="project" value="UniProtKB"/>
</dbReference>
<dbReference type="GO" id="GO:0007259">
    <property type="term" value="P:cell surface receptor signaling pathway via JAK-STAT"/>
    <property type="evidence" value="ECO:0000270"/>
    <property type="project" value="UniProtKB"/>
</dbReference>
<dbReference type="GO" id="GO:0019221">
    <property type="term" value="P:cytokine-mediated signaling pathway"/>
    <property type="evidence" value="ECO:0000318"/>
    <property type="project" value="GO_Central"/>
</dbReference>
<dbReference type="GO" id="GO:0006952">
    <property type="term" value="P:defense response"/>
    <property type="evidence" value="ECO:0000303"/>
    <property type="project" value="UniProtKB"/>
</dbReference>
<dbReference type="GO" id="GO:0098542">
    <property type="term" value="P:defense response to other organism"/>
    <property type="evidence" value="ECO:0007669"/>
    <property type="project" value="Ensembl"/>
</dbReference>
<dbReference type="GO" id="GO:0002067">
    <property type="term" value="P:glandular epithelial cell differentiation"/>
    <property type="evidence" value="ECO:0007669"/>
    <property type="project" value="Ensembl"/>
</dbReference>
<dbReference type="GO" id="GO:0042592">
    <property type="term" value="P:homeostatic process"/>
    <property type="evidence" value="ECO:0000303"/>
    <property type="project" value="UniProtKB"/>
</dbReference>
<dbReference type="GO" id="GO:0030225">
    <property type="term" value="P:macrophage differentiation"/>
    <property type="evidence" value="ECO:0000303"/>
    <property type="project" value="UniProtKB"/>
</dbReference>
<dbReference type="GO" id="GO:0000165">
    <property type="term" value="P:MAPK cascade"/>
    <property type="evidence" value="ECO:0000303"/>
    <property type="project" value="UniProtKB"/>
</dbReference>
<dbReference type="GO" id="GO:0030224">
    <property type="term" value="P:monocyte differentiation"/>
    <property type="evidence" value="ECO:0000270"/>
    <property type="project" value="UniProtKB"/>
</dbReference>
<dbReference type="GO" id="GO:0043066">
    <property type="term" value="P:negative regulation of apoptotic process"/>
    <property type="evidence" value="ECO:0000303"/>
    <property type="project" value="UniProtKB"/>
</dbReference>
<dbReference type="GO" id="GO:0043031">
    <property type="term" value="P:negative regulation of macrophage activation"/>
    <property type="evidence" value="ECO:0000303"/>
    <property type="project" value="UniProtKB"/>
</dbReference>
<dbReference type="GO" id="GO:0008284">
    <property type="term" value="P:positive regulation of cell population proliferation"/>
    <property type="evidence" value="ECO:0000314"/>
    <property type="project" value="UniProtKB"/>
</dbReference>
<dbReference type="GO" id="GO:0045893">
    <property type="term" value="P:positive regulation of DNA-templated transcription"/>
    <property type="evidence" value="ECO:0000303"/>
    <property type="project" value="UniProtKB"/>
</dbReference>
<dbReference type="GO" id="GO:0042531">
    <property type="term" value="P:positive regulation of tyrosine phosphorylation of STAT protein"/>
    <property type="evidence" value="ECO:0000270"/>
    <property type="project" value="UniProtKB"/>
</dbReference>
<dbReference type="CDD" id="cd00063">
    <property type="entry name" value="FN3"/>
    <property type="match status" value="2"/>
</dbReference>
<dbReference type="FunFam" id="2.60.40.10:FF:000465">
    <property type="entry name" value="Granulocyte colony-stimulating factor receptor"/>
    <property type="match status" value="1"/>
</dbReference>
<dbReference type="FunFam" id="2.60.40.10:FF:000732">
    <property type="entry name" value="Interleukin 31 receptor A"/>
    <property type="match status" value="1"/>
</dbReference>
<dbReference type="FunFam" id="2.60.40.10:FF:000908">
    <property type="entry name" value="Interleukin 31 receptor A"/>
    <property type="match status" value="1"/>
</dbReference>
<dbReference type="FunFam" id="2.60.40.10:FF:000913">
    <property type="entry name" value="Interleukin 31 receptor A"/>
    <property type="match status" value="1"/>
</dbReference>
<dbReference type="FunFam" id="2.60.40.10:FF:000414">
    <property type="entry name" value="Interleukin-6 receptor subunit beta"/>
    <property type="match status" value="1"/>
</dbReference>
<dbReference type="Gene3D" id="2.60.40.10">
    <property type="entry name" value="Immunoglobulins"/>
    <property type="match status" value="5"/>
</dbReference>
<dbReference type="InterPro" id="IPR003961">
    <property type="entry name" value="FN3_dom"/>
</dbReference>
<dbReference type="InterPro" id="IPR036116">
    <property type="entry name" value="FN3_sf"/>
</dbReference>
<dbReference type="InterPro" id="IPR013783">
    <property type="entry name" value="Ig-like_fold"/>
</dbReference>
<dbReference type="InterPro" id="IPR052672">
    <property type="entry name" value="Type1_Cytokine_Rcpt_Type2"/>
</dbReference>
<dbReference type="InterPro" id="IPR015321">
    <property type="entry name" value="TypeI_recpt_CBD"/>
</dbReference>
<dbReference type="PANTHER" id="PTHR48423">
    <property type="entry name" value="INTERLEUKIN-27 RECEPTOR SUBUNIT ALPHA"/>
    <property type="match status" value="1"/>
</dbReference>
<dbReference type="PANTHER" id="PTHR48423:SF1">
    <property type="entry name" value="INTERLEUKIN-27 RECEPTOR SUBUNIT ALPHA"/>
    <property type="match status" value="1"/>
</dbReference>
<dbReference type="Pfam" id="PF00041">
    <property type="entry name" value="fn3"/>
    <property type="match status" value="1"/>
</dbReference>
<dbReference type="Pfam" id="PF09240">
    <property type="entry name" value="IL6Ra-bind"/>
    <property type="match status" value="1"/>
</dbReference>
<dbReference type="SMART" id="SM00060">
    <property type="entry name" value="FN3"/>
    <property type="match status" value="4"/>
</dbReference>
<dbReference type="SUPFAM" id="SSF49265">
    <property type="entry name" value="Fibronectin type III"/>
    <property type="match status" value="3"/>
</dbReference>
<dbReference type="PROSITE" id="PS50853">
    <property type="entry name" value="FN3"/>
    <property type="match status" value="3"/>
</dbReference>
<sequence>MMWTWALWMLPSLCKFSLAALPAKPENISCVYYYRKNLTCTWSPGKETSYTQYTVKRTYAFGEKHDNCTTNSSTSENRASCSFFLPRITIPDNYTIEVEAENGDGVIKSHMTYWRLENIAKTEPPKIFRVKPVLGIKRMIQIEWIKPELAPVSSDLKYTLRFRTVNSTSWMEVNFAKNRKDKNQTYNLTGLQPFTEYVIALRCAVKESKFWSDWSQEKMGMTEEEAPCGLELWRVLKPAEADGRRPVRLLWKKARGAPVLEKTLGYNIWYYPESNTNLTETMNTTNQQLELHLGGESFWVSMISYNSLGKSPVATLRIPAIQEKSFQCIEVMQACVAEDQLVVKWQSSALDVNTWMIEWFPDVDSEPTTLSWESVSQATNWTIQQDKLKPFWCYNISVYPMLHDKVGEPYSIQAYAKEGVPSEGPETKVENIGVKTVTITWKEIPKSERKGIICNYTIFYQAEGGKGFSKTVNSSILQYGLESLKRKTSYIVQVMASTSAGGTNGTSINFKTLSFSVFEIILITSLIGGGLLILIILTVAYGLKKPNKLTHLCWPTVPNPAESSIATWHGDDFKDKLNLKESDDSVNTEDRILKPCSTPSDKLVIDKLVVNFGNVLQEIFTDEARTGQENNLGGEKNGYVTCPFRPDCPLGKSFEELPVSPEIPPRKSQYLRSRMPEGTRPEAKEQLLFSGQSLVPDHLCEEGAPNPYLKNSVTAREFLVSEKLPEHTKGEV</sequence>
<gene>
    <name type="primary">IL31RA</name>
    <name type="synonym">CRL3</name>
    <name type="synonym">GPL</name>
    <name type="ORF">UNQ6368/PRO21073/PRO21384</name>
</gene>
<keyword id="KW-0025">Alternative splicing</keyword>
<keyword id="KW-1008">Amyloidosis</keyword>
<keyword id="KW-1003">Cell membrane</keyword>
<keyword id="KW-0966">Cell projection</keyword>
<keyword id="KW-0903">Direct protein sequencing</keyword>
<keyword id="KW-0225">Disease variant</keyword>
<keyword id="KW-0325">Glycoprotein</keyword>
<keyword id="KW-0391">Immunity</keyword>
<keyword id="KW-0472">Membrane</keyword>
<keyword id="KW-1267">Proteomics identification</keyword>
<keyword id="KW-0675">Receptor</keyword>
<keyword id="KW-1185">Reference proteome</keyword>
<keyword id="KW-0677">Repeat</keyword>
<keyword id="KW-0732">Signal</keyword>
<keyword id="KW-0770">Synapse</keyword>
<keyword id="KW-0812">Transmembrane</keyword>
<keyword id="KW-1133">Transmembrane helix</keyword>
<feature type="signal peptide" evidence="8">
    <location>
        <begin position="1"/>
        <end position="19"/>
    </location>
</feature>
<feature type="chain" id="PRO_0000274572" description="Interleukin-31 receptor subunit alpha">
    <location>
        <begin position="20"/>
        <end position="732"/>
    </location>
</feature>
<feature type="topological domain" description="Extracellular" evidence="2">
    <location>
        <begin position="20"/>
        <end position="519"/>
    </location>
</feature>
<feature type="transmembrane region" description="Helical" evidence="2">
    <location>
        <begin position="520"/>
        <end position="540"/>
    </location>
</feature>
<feature type="topological domain" description="Cytoplasmic" evidence="2">
    <location>
        <begin position="541"/>
        <end position="732"/>
    </location>
</feature>
<feature type="domain" description="Fibronectin type-III 1" evidence="3">
    <location>
        <begin position="24"/>
        <end position="122"/>
    </location>
</feature>
<feature type="domain" description="Fibronectin type-III 2" evidence="3">
    <location>
        <begin position="124"/>
        <end position="225"/>
    </location>
</feature>
<feature type="domain" description="Fibronectin type-III 3" evidence="3">
    <location>
        <begin position="223"/>
        <end position="315"/>
    </location>
</feature>
<feature type="domain" description="Fibronectin type-III 4" evidence="3">
    <location>
        <begin position="319"/>
        <end position="416"/>
    </location>
</feature>
<feature type="domain" description="Fibronectin type-III 5" evidence="3">
    <location>
        <begin position="421"/>
        <end position="515"/>
    </location>
</feature>
<feature type="glycosylation site" description="N-linked (GlcNAc...) asparagine" evidence="2">
    <location>
        <position position="37"/>
    </location>
</feature>
<feature type="glycosylation site" description="N-linked (GlcNAc...) asparagine" evidence="2">
    <location>
        <position position="67"/>
    </location>
</feature>
<feature type="glycosylation site" description="N-linked (GlcNAc...) asparagine" evidence="2">
    <location>
        <position position="93"/>
    </location>
</feature>
<feature type="glycosylation site" description="N-linked (GlcNAc...) asparagine" evidence="2">
    <location>
        <position position="166"/>
    </location>
</feature>
<feature type="glycosylation site" description="N-linked (GlcNAc...) asparagine" evidence="2">
    <location>
        <position position="187"/>
    </location>
</feature>
<feature type="glycosylation site" description="N-linked (GlcNAc...) asparagine" evidence="2">
    <location>
        <position position="277"/>
    </location>
</feature>
<feature type="glycosylation site" description="N-linked (GlcNAc...) asparagine" evidence="2">
    <location>
        <position position="283"/>
    </location>
</feature>
<feature type="glycosylation site" description="N-linked (GlcNAc...) asparagine" evidence="2">
    <location>
        <position position="395"/>
    </location>
</feature>
<feature type="glycosylation site" description="N-linked (GlcNAc...) asparagine" evidence="2">
    <location>
        <position position="455"/>
    </location>
</feature>
<feature type="glycosylation site" description="N-linked (GlcNAc...) asparagine" evidence="2">
    <location>
        <position position="504"/>
    </location>
</feature>
<feature type="splice variant" id="VSP_022798" description="In isoform 6." evidence="17">
    <location>
        <begin position="1"/>
        <end position="110"/>
    </location>
</feature>
<feature type="splice variant" id="VSP_022799" description="In isoform 2, isoform 4, isoform 5 and isoform 8." evidence="15 16">
    <original>M</original>
    <variation>MCIRQLKFFTTACVCECPQNILSPQPSCVNLGM</variation>
    <location>
        <position position="1"/>
    </location>
</feature>
<feature type="splice variant" id="VSP_022800" description="In isoform 3, isoform 7, isoform 9, isoform 10, isoform 11 and isoform 12." evidence="16 18">
    <original>M</original>
    <variation>MKLSPQPSCVNLGM</variation>
    <location>
        <position position="1"/>
    </location>
</feature>
<feature type="splice variant" id="VSP_022801" description="In isoform 4." evidence="16">
    <location>
        <begin position="325"/>
        <end position="732"/>
    </location>
</feature>
<feature type="splice variant" id="VSP_022802" description="In isoform 7." evidence="18">
    <original>GGKGFS</original>
    <variation>A</variation>
    <location>
        <begin position="464"/>
        <end position="469"/>
    </location>
</feature>
<feature type="splice variant" id="VSP_022803" description="In isoform 8." evidence="15">
    <original>SKTVNSSILQYGLESLKRKTSYIVQVMASTSAGGTNGTSINFKTLSFSVFEIILITSLIGGGLLILIILTVAYGLKKPNKLT</original>
    <variation>CKHAHSEVEKNPKPQIDAMDRPVVGMAPPSHCDLQPGMNHLASLNLSENGAKSTHLLGFWGLNESEVTVPERRVLRKWKELL</variation>
    <location>
        <begin position="469"/>
        <end position="550"/>
    </location>
</feature>
<feature type="splice variant" id="VSP_022804" description="In isoform 7." evidence="18">
    <original>TSAG</original>
    <variation>YSGG</variation>
    <location>
        <begin position="498"/>
        <end position="501"/>
    </location>
</feature>
<feature type="splice variant" id="VSP_022805" description="In isoform 7." evidence="18">
    <location>
        <begin position="502"/>
        <end position="732"/>
    </location>
</feature>
<feature type="splice variant" id="VSP_022806" description="In isoform 9." evidence="19">
    <location>
        <begin position="548"/>
        <end position="732"/>
    </location>
</feature>
<feature type="splice variant" id="VSP_022807" description="In isoform 8." evidence="15">
    <location>
        <begin position="551"/>
        <end position="732"/>
    </location>
</feature>
<feature type="splice variant" id="VSP_022808" description="In isoform 11." evidence="19">
    <original>LKPCSTPSDKLVIDKLVVNFG</original>
    <variation>KGSELGTKLKFKPLISLDCAF</variation>
    <location>
        <begin position="593"/>
        <end position="613"/>
    </location>
</feature>
<feature type="splice variant" id="VSP_022809" description="In isoform 10." evidence="19">
    <original>LKPCST</original>
    <variation>RARYQA</variation>
    <location>
        <begin position="593"/>
        <end position="598"/>
    </location>
</feature>
<feature type="splice variant" id="VSP_022810" description="In isoform 10." evidence="19">
    <location>
        <begin position="599"/>
        <end position="732"/>
    </location>
</feature>
<feature type="splice variant" id="VSP_022811" description="In isoform 11." evidence="19">
    <location>
        <begin position="614"/>
        <end position="732"/>
    </location>
</feature>
<feature type="splice variant" id="VSP_022812" description="In isoform 3 and isoform 5." evidence="16">
    <original>YVTCPFRPDCP</original>
    <variation>TRILSSCPTSI</variation>
    <location>
        <begin position="639"/>
        <end position="649"/>
    </location>
</feature>
<feature type="splice variant" id="VSP_022813" description="In isoform 3 and isoform 5." evidence="16">
    <location>
        <begin position="650"/>
        <end position="732"/>
    </location>
</feature>
<feature type="sequence variant" id="VAR_030328" description="In dbSNP:rs13184107.">
    <original>D</original>
    <variation>N</variation>
    <location>
        <position position="155"/>
    </location>
</feature>
<feature type="sequence variant" id="VAR_065809" description="In PLCA2." evidence="12">
    <original>S</original>
    <variation>F</variation>
    <location>
        <position position="489"/>
    </location>
</feature>
<feature type="sequence variant" id="VAR_030329" description="In dbSNP:rs161704.">
    <original>S</original>
    <variation>N</variation>
    <location>
        <position position="497"/>
    </location>
</feature>
<feature type="mutagenesis site" description="No effect on STAT1 and STAT3 activation. Slight decrease; when associated with A-670 and A-708." evidence="7 9">
    <original>Y</original>
    <variation>A</variation>
    <location>
        <position position="639"/>
    </location>
</feature>
<feature type="mutagenesis site" description="Abrogates STAT5 activation. Mild effect on STAT1 activation. No effect on STAT3 activation." evidence="7 9">
    <original>Y</original>
    <variation>F</variation>
    <location>
        <position position="639"/>
    </location>
</feature>
<feature type="mutagenesis site" description="No effect on STAT1 and STAT3 activation. Slight decrease; when associated with A-639 and A-708." evidence="7 9">
    <original>Y</original>
    <variation>A</variation>
    <location>
        <position position="670"/>
    </location>
</feature>
<feature type="mutagenesis site" description="No effect on STAT3 and STAT5 activation. Mild effect on STAT1 activation." evidence="7 9">
    <original>Y</original>
    <variation>F</variation>
    <location>
        <position position="670"/>
    </location>
</feature>
<feature type="mutagenesis site" description="No effect on STAT1 and STAT3 activation. Slight decrease; when associated with A-639 and A-670." evidence="7 9">
    <original>Y</original>
    <variation>A</variation>
    <location>
        <position position="708"/>
    </location>
</feature>
<feature type="mutagenesis site" description="Abrogates STAT3 activation. Loss of interaction with STAT3. Mild effect on STAT1 activation. No effect on STAT5 activation." evidence="7 9">
    <original>Y</original>
    <variation>F</variation>
    <location>
        <position position="708"/>
    </location>
</feature>
<proteinExistence type="evidence at protein level"/>
<reference key="1">
    <citation type="journal article" date="2002" name="J. Biol. Chem.">
        <title>A novel type I cytokine receptor is expressed on monocytes, signals proliferation, and activates STAT-3 and STAT-5.</title>
        <authorList>
            <person name="Ghilardi N."/>
            <person name="Li J."/>
            <person name="Hongo J.-A."/>
            <person name="Yi S."/>
            <person name="Gurney A."/>
            <person name="De Sauvage F.J."/>
        </authorList>
    </citation>
    <scope>NUCLEOTIDE SEQUENCE [MRNA] (ISOFORM 1)</scope>
    <scope>FUNCTION</scope>
    <scope>TISSUE SPECIFICITY</scope>
    <scope>SUBCELLULAR LOCATION</scope>
    <scope>INDUCTION</scope>
</reference>
<reference key="2">
    <citation type="journal article" date="2004" name="Nat. Immunol.">
        <title>Interleukin 31, a cytokine produced by activated T cells, induces dermatitis in mice.</title>
        <authorList>
            <person name="Dillon S.R."/>
            <person name="Sprecher C."/>
            <person name="Hammond A."/>
            <person name="Bilsborough J."/>
            <person name="Rosenfeld-Franklin M."/>
            <person name="Presnell S.R."/>
            <person name="Haugen H.S."/>
            <person name="Maurer M."/>
            <person name="Harder B."/>
            <person name="Johnston J."/>
            <person name="Bort S."/>
            <person name="Mudri S."/>
            <person name="Kuijper J.L."/>
            <person name="Bukowski T."/>
            <person name="Shea P."/>
            <person name="Dong D.L."/>
            <person name="Dasovich M."/>
            <person name="Grant F.J."/>
            <person name="Lockwood L."/>
            <person name="Levin S.D."/>
            <person name="LeCiel C."/>
            <person name="Waggie K."/>
            <person name="Day H."/>
            <person name="Topouzis S."/>
            <person name="Kramer J."/>
            <person name="Kuestner R."/>
            <person name="Chen Z."/>
            <person name="Foster D."/>
            <person name="Parrish-Novak J."/>
            <person name="Gross J.A."/>
        </authorList>
    </citation>
    <scope>NUCLEOTIDE SEQUENCE [MRNA] (ISOFORMS 2; 3; 4 AND 5)</scope>
    <scope>FUNCTION</scope>
    <scope>OLIGOMERIZATION</scope>
    <scope>TISSUE SPECIFICITY</scope>
    <scope>INDUCTION</scope>
</reference>
<reference key="3">
    <citation type="submission" date="1998-11" db="EMBL/GenBank/DDBJ databases">
        <title>A novel soluble type 1 cytokine receptor.</title>
        <authorList>
            <person name="Zhang W."/>
            <person name="Wan T."/>
            <person name="He L."/>
            <person name="Yuan Z."/>
            <person name="Cao X."/>
        </authorList>
    </citation>
    <scope>NUCLEOTIDE SEQUENCE [MRNA] (ISOFORM 7)</scope>
</reference>
<reference key="4">
    <citation type="journal article" date="2003" name="Genome Res.">
        <title>The secreted protein discovery initiative (SPDI), a large-scale effort to identify novel human secreted and transmembrane proteins: a bioinformatics assessment.</title>
        <authorList>
            <person name="Clark H.F."/>
            <person name="Gurney A.L."/>
            <person name="Abaya E."/>
            <person name="Baker K."/>
            <person name="Baldwin D.T."/>
            <person name="Brush J."/>
            <person name="Chen J."/>
            <person name="Chow B."/>
            <person name="Chui C."/>
            <person name="Crowley C."/>
            <person name="Currell B."/>
            <person name="Deuel B."/>
            <person name="Dowd P."/>
            <person name="Eaton D."/>
            <person name="Foster J.S."/>
            <person name="Grimaldi C."/>
            <person name="Gu Q."/>
            <person name="Hass P.E."/>
            <person name="Heldens S."/>
            <person name="Huang A."/>
            <person name="Kim H.S."/>
            <person name="Klimowski L."/>
            <person name="Jin Y."/>
            <person name="Johnson S."/>
            <person name="Lee J."/>
            <person name="Lewis L."/>
            <person name="Liao D."/>
            <person name="Mark M.R."/>
            <person name="Robbie E."/>
            <person name="Sanchez C."/>
            <person name="Schoenfeld J."/>
            <person name="Seshagiri S."/>
            <person name="Simmons L."/>
            <person name="Singh J."/>
            <person name="Smith V."/>
            <person name="Stinson J."/>
            <person name="Vagts A."/>
            <person name="Vandlen R.L."/>
            <person name="Watanabe C."/>
            <person name="Wieand D."/>
            <person name="Woods K."/>
            <person name="Xie M.-H."/>
            <person name="Yansura D.G."/>
            <person name="Yi S."/>
            <person name="Yu G."/>
            <person name="Yuan J."/>
            <person name="Zhang M."/>
            <person name="Zhang Z."/>
            <person name="Goddard A.D."/>
            <person name="Wood W.I."/>
            <person name="Godowski P.J."/>
            <person name="Gray A.M."/>
        </authorList>
    </citation>
    <scope>NUCLEOTIDE SEQUENCE [LARGE SCALE MRNA] (ISOFORMS 1 AND 8)</scope>
</reference>
<reference key="5">
    <citation type="journal article" date="2004" name="Nature">
        <title>The DNA sequence and comparative analysis of human chromosome 5.</title>
        <authorList>
            <person name="Schmutz J."/>
            <person name="Martin J."/>
            <person name="Terry A."/>
            <person name="Couronne O."/>
            <person name="Grimwood J."/>
            <person name="Lowry S."/>
            <person name="Gordon L.A."/>
            <person name="Scott D."/>
            <person name="Xie G."/>
            <person name="Huang W."/>
            <person name="Hellsten U."/>
            <person name="Tran-Gyamfi M."/>
            <person name="She X."/>
            <person name="Prabhakar S."/>
            <person name="Aerts A."/>
            <person name="Altherr M."/>
            <person name="Bajorek E."/>
            <person name="Black S."/>
            <person name="Branscomb E."/>
            <person name="Caoile C."/>
            <person name="Challacombe J.F."/>
            <person name="Chan Y.M."/>
            <person name="Denys M."/>
            <person name="Detter J.C."/>
            <person name="Escobar J."/>
            <person name="Flowers D."/>
            <person name="Fotopulos D."/>
            <person name="Glavina T."/>
            <person name="Gomez M."/>
            <person name="Gonzales E."/>
            <person name="Goodstein D."/>
            <person name="Grigoriev I."/>
            <person name="Groza M."/>
            <person name="Hammon N."/>
            <person name="Hawkins T."/>
            <person name="Haydu L."/>
            <person name="Israni S."/>
            <person name="Jett J."/>
            <person name="Kadner K."/>
            <person name="Kimball H."/>
            <person name="Kobayashi A."/>
            <person name="Lopez F."/>
            <person name="Lou Y."/>
            <person name="Martinez D."/>
            <person name="Medina C."/>
            <person name="Morgan J."/>
            <person name="Nandkeshwar R."/>
            <person name="Noonan J.P."/>
            <person name="Pitluck S."/>
            <person name="Pollard M."/>
            <person name="Predki P."/>
            <person name="Priest J."/>
            <person name="Ramirez L."/>
            <person name="Retterer J."/>
            <person name="Rodriguez A."/>
            <person name="Rogers S."/>
            <person name="Salamov A."/>
            <person name="Salazar A."/>
            <person name="Thayer N."/>
            <person name="Tice H."/>
            <person name="Tsai M."/>
            <person name="Ustaszewska A."/>
            <person name="Vo N."/>
            <person name="Wheeler J."/>
            <person name="Wu K."/>
            <person name="Yang J."/>
            <person name="Dickson M."/>
            <person name="Cheng J.-F."/>
            <person name="Eichler E.E."/>
            <person name="Olsen A."/>
            <person name="Pennacchio L.A."/>
            <person name="Rokhsar D.S."/>
            <person name="Richardson P."/>
            <person name="Lucas S.M."/>
            <person name="Myers R.M."/>
            <person name="Rubin E.M."/>
        </authorList>
    </citation>
    <scope>NUCLEOTIDE SEQUENCE [LARGE SCALE GENOMIC DNA]</scope>
</reference>
<reference key="6">
    <citation type="journal article" date="2004" name="Genome Res.">
        <title>The status, quality, and expansion of the NIH full-length cDNA project: the Mammalian Gene Collection (MGC).</title>
        <authorList>
            <consortium name="The MGC Project Team"/>
        </authorList>
    </citation>
    <scope>NUCLEOTIDE SEQUENCE [LARGE SCALE MRNA] (ISOFORM 6)</scope>
</reference>
<reference key="7">
    <citation type="journal article" date="2004" name="Protein Sci.">
        <title>Signal peptide prediction based on analysis of experimentally verified cleavage sites.</title>
        <authorList>
            <person name="Zhang Z."/>
            <person name="Henzel W.J."/>
        </authorList>
    </citation>
    <scope>PROTEIN SEQUENCE OF 20-34</scope>
</reference>
<reference key="8">
    <citation type="journal article" date="2003" name="J. Biol. Chem.">
        <title>GPL, a novel cytokine receptor related to GP130 and leukemia inhibitory factor receptor.</title>
        <authorList>
            <person name="Diveu C."/>
            <person name="Lelievre E."/>
            <person name="Perret D."/>
            <person name="Lagrue Lak-Hal A.-H."/>
            <person name="Froger J."/>
            <person name="Guillet C."/>
            <person name="Chevalier S."/>
            <person name="Rousseau F."/>
            <person name="Wesa A."/>
            <person name="Preisser L."/>
            <person name="Chabbert M."/>
            <person name="Gauchat J.-F."/>
            <person name="Galy A."/>
            <person name="Gascan H."/>
            <person name="Morel A."/>
        </authorList>
    </citation>
    <scope>ALTERNATIVE SPLICING (ISOFORMS 9; 10; 11 AND 12)</scope>
    <scope>FUNCTION</scope>
    <scope>TISSUE SPECIFICITY</scope>
    <scope>INDUCTION</scope>
    <scope>SUBCELLULAR LOCATION</scope>
    <scope>GLYCOSYLATION</scope>
</reference>
<reference key="9">
    <citation type="journal article" date="2004" name="Eur. Cytokine Netw.">
        <title>Predominant expression of the long isoform of GP130-like (GPL) receptor is required for interleukin-31 signaling.</title>
        <authorList>
            <person name="Diveu C."/>
            <person name="Lagrue Lak-Hal A.-H."/>
            <person name="Froger J."/>
            <person name="Ravon E."/>
            <person name="Grimaud L."/>
            <person name="Barbier F."/>
            <person name="Hermann J."/>
            <person name="Gascan H."/>
            <person name="Chevalier S."/>
        </authorList>
    </citation>
    <scope>FUNCTION</scope>
    <scope>MUTAGENESIS OF TYR-639; TYR-670 AND TYR-708</scope>
</reference>
<reference key="10">
    <citation type="journal article" date="2004" name="J. Biol. Chem.">
        <title>Characterization of the signaling capacities of the novel gp130-like cytokine receptor.</title>
        <authorList>
            <person name="Dreuw A."/>
            <person name="Radtke S."/>
            <person name="Pflanz S."/>
            <person name="Lippok B.E."/>
            <person name="Heinrich P.C."/>
            <person name="Hermanns H.M."/>
        </authorList>
    </citation>
    <scope>FUNCTION</scope>
    <scope>INTERACTION WITH JAK1 AND STAT3</scope>
    <scope>MUTAGENESIS OF TYR-639; TYR-670 AND TYR-708</scope>
</reference>
<reference key="11">
    <citation type="journal article" date="2006" name="J. Allergy Clin. Immunol.">
        <title>IL-31 is associated with cutaneous lymphocyte antigen-positive skin homing T cells in patients with atopic dermatitis.</title>
        <authorList>
            <person name="Bilsborough J."/>
            <person name="Leung D.Y.M."/>
            <person name="Maurer M."/>
            <person name="Howell M."/>
            <person name="Boguniewicz M."/>
            <person name="Yao L."/>
            <person name="Storey H."/>
            <person name="LeCiel C."/>
            <person name="Harder B."/>
            <person name="Gross J.A."/>
        </authorList>
    </citation>
    <scope>INDUCTION</scope>
    <scope>TISSUE SPECIFICITY</scope>
</reference>
<reference key="12">
    <citation type="journal article" date="2008" name="J. Interferon Cytokine Res.">
        <title>Regulated expression of the IL-31 receptor in bronchial and alveolar epithelial cells, pulmonary fibroblasts, and pulmonary macrophages.</title>
        <authorList>
            <person name="Jawa R.S."/>
            <person name="Chattopadhyay S."/>
            <person name="Tracy E."/>
            <person name="Wang Y."/>
            <person name="Huntoon K."/>
            <person name="Dayton M.T."/>
            <person name="Baumann H."/>
        </authorList>
    </citation>
    <scope>TISSUE SPECIFICITY</scope>
    <scope>INDUCTION</scope>
</reference>
<reference key="13">
    <citation type="journal article" date="2011" name="Allergy">
        <title>Functional effects of interleukin 31 in human primary keratinocytes.</title>
        <authorList>
            <person name="Kasraie S."/>
            <person name="Niebuhr M."/>
            <person name="Baumert K."/>
            <person name="Werfel T."/>
        </authorList>
    </citation>
    <scope>TISSUE SPECIFICITY</scope>
    <scope>INDUCTION</scope>
</reference>
<reference key="14">
    <citation type="journal article" date="2014" name="J. Allergy Clin. Immunol.">
        <title>A sensory neuron-expressed IL-31 receptor mediates T helper cell-dependent itch: Involvement of TRPV1 and TRPA1.</title>
        <authorList>
            <person name="Cevikbas F."/>
            <person name="Wang X."/>
            <person name="Akiyama T."/>
            <person name="Kempkes C."/>
            <person name="Savinko T."/>
            <person name="Antal A."/>
            <person name="Kukova G."/>
            <person name="Buhl T."/>
            <person name="Ikoma A."/>
            <person name="Buddenkotte J."/>
            <person name="Soumelis V."/>
            <person name="Feld M."/>
            <person name="Alenius H."/>
            <person name="Dillon S.R."/>
            <person name="Carstens E."/>
            <person name="Homey B."/>
            <person name="Basbaum A."/>
            <person name="Steinhoff M."/>
        </authorList>
    </citation>
    <scope>TISSUE SPECIFICITY</scope>
</reference>
<reference key="15">
    <citation type="journal article" date="2010" name="Eur. J. Hum. Genet.">
        <title>Novel IL31RA gene mutation and ancestral OSMR mutant allele in familial primary cutaneous amyloidosis.</title>
        <authorList>
            <person name="Lin M.W."/>
            <person name="Lee D.D."/>
            <person name="Liu T.T."/>
            <person name="Lin Y.F."/>
            <person name="Chen S.Y."/>
            <person name="Huang C.C."/>
            <person name="Weng H.Y."/>
            <person name="Liu Y.F."/>
            <person name="Tanaka A."/>
            <person name="Arita K."/>
            <person name="Lai-Cheong J."/>
            <person name="Palisson F."/>
            <person name="Chang Y.T."/>
            <person name="Wong C.K."/>
            <person name="Matsuura I."/>
            <person name="McGrath J.A."/>
            <person name="Tsai S.F."/>
        </authorList>
    </citation>
    <scope>VARIANT PLCA2 PHE-489</scope>
</reference>
<evidence type="ECO:0000250" key="1">
    <source>
        <dbReference type="UniProtKB" id="Q8K5B1"/>
    </source>
</evidence>
<evidence type="ECO:0000255" key="2"/>
<evidence type="ECO:0000255" key="3">
    <source>
        <dbReference type="PROSITE-ProRule" id="PRU00316"/>
    </source>
</evidence>
<evidence type="ECO:0000269" key="4">
    <source>
    </source>
</evidence>
<evidence type="ECO:0000269" key="5">
    <source>
    </source>
</evidence>
<evidence type="ECO:0000269" key="6">
    <source>
    </source>
</evidence>
<evidence type="ECO:0000269" key="7">
    <source>
    </source>
</evidence>
<evidence type="ECO:0000269" key="8">
    <source>
    </source>
</evidence>
<evidence type="ECO:0000269" key="9">
    <source>
    </source>
</evidence>
<evidence type="ECO:0000269" key="10">
    <source>
    </source>
</evidence>
<evidence type="ECO:0000269" key="11">
    <source>
    </source>
</evidence>
<evidence type="ECO:0000269" key="12">
    <source>
    </source>
</evidence>
<evidence type="ECO:0000269" key="13">
    <source>
    </source>
</evidence>
<evidence type="ECO:0000269" key="14">
    <source>
    </source>
</evidence>
<evidence type="ECO:0000303" key="15">
    <source>
    </source>
</evidence>
<evidence type="ECO:0000303" key="16">
    <source>
    </source>
</evidence>
<evidence type="ECO:0000303" key="17">
    <source>
    </source>
</evidence>
<evidence type="ECO:0000303" key="18">
    <source ref="3"/>
</evidence>
<evidence type="ECO:0000305" key="19"/>
<evidence type="ECO:0000305" key="20">
    <source>
    </source>
</evidence>
<evidence type="ECO:0000305" key="21">
    <source>
    </source>
</evidence>
<organism>
    <name type="scientific">Homo sapiens</name>
    <name type="common">Human</name>
    <dbReference type="NCBI Taxonomy" id="9606"/>
    <lineage>
        <taxon>Eukaryota</taxon>
        <taxon>Metazoa</taxon>
        <taxon>Chordata</taxon>
        <taxon>Craniata</taxon>
        <taxon>Vertebrata</taxon>
        <taxon>Euteleostomi</taxon>
        <taxon>Mammalia</taxon>
        <taxon>Eutheria</taxon>
        <taxon>Euarchontoglires</taxon>
        <taxon>Primates</taxon>
        <taxon>Haplorrhini</taxon>
        <taxon>Catarrhini</taxon>
        <taxon>Hominidae</taxon>
        <taxon>Homo</taxon>
    </lineage>
</organism>
<accession>Q8NI17</accession>
<accession>A6NIF8</accession>
<accession>Q2TBA1</accession>
<accession>Q6EBC3</accession>
<accession>Q6EBC4</accession>
<accession>Q6EBC5</accession>
<accession>Q6EBC6</accession>
<accession>Q6UWL8</accession>
<accession>Q8WYJ0</accession>
<name>IL31R_HUMAN</name>
<protein>
    <recommendedName>
        <fullName>Interleukin-31 receptor subunit alpha</fullName>
        <shortName>IL-31 receptor subunit alpha</shortName>
        <shortName>IL-31R subunit alpha</shortName>
        <shortName>IL-31R-alpha</shortName>
        <shortName>IL-31RA</shortName>
    </recommendedName>
    <alternativeName>
        <fullName>Cytokine receptor-like 3</fullName>
    </alternativeName>
    <alternativeName>
        <fullName>GLM-R</fullName>
        <shortName>hGLM-R</shortName>
    </alternativeName>
    <alternativeName>
        <fullName>Gp130-like monocyte receptor</fullName>
        <shortName>Gp130-like receptor</shortName>
    </alternativeName>
    <alternativeName>
        <fullName>ZcytoR17</fullName>
    </alternativeName>
</protein>